<organism>
    <name type="scientific">Fusobacterium nucleatum subsp. nucleatum (strain ATCC 25586 / DSM 15643 / BCRC 10681 / CIP 101130 / JCM 8532 / KCTC 2640 / LMG 13131 / VPI 4355)</name>
    <dbReference type="NCBI Taxonomy" id="190304"/>
    <lineage>
        <taxon>Bacteria</taxon>
        <taxon>Fusobacteriati</taxon>
        <taxon>Fusobacteriota</taxon>
        <taxon>Fusobacteriia</taxon>
        <taxon>Fusobacteriales</taxon>
        <taxon>Fusobacteriaceae</taxon>
        <taxon>Fusobacterium</taxon>
    </lineage>
</organism>
<dbReference type="EC" id="3.5.4.16" evidence="2"/>
<dbReference type="EMBL" id="AE009951">
    <property type="protein sequence ID" value="AAL94284.1"/>
    <property type="molecule type" value="Genomic_DNA"/>
</dbReference>
<dbReference type="RefSeq" id="NP_602985.1">
    <property type="nucleotide sequence ID" value="NC_003454.1"/>
</dbReference>
<dbReference type="SMR" id="Q8RH43"/>
<dbReference type="FunCoup" id="Q8RH43">
    <property type="interactions" value="214"/>
</dbReference>
<dbReference type="STRING" id="190304.FN0071"/>
<dbReference type="PaxDb" id="190304-FN0071"/>
<dbReference type="EnsemblBacteria" id="AAL94284">
    <property type="protein sequence ID" value="AAL94284"/>
    <property type="gene ID" value="FN0071"/>
</dbReference>
<dbReference type="KEGG" id="fnu:FN0071"/>
<dbReference type="PATRIC" id="fig|190304.8.peg.663"/>
<dbReference type="eggNOG" id="COG0302">
    <property type="taxonomic scope" value="Bacteria"/>
</dbReference>
<dbReference type="HOGENOM" id="CLU_049768_3_3_0"/>
<dbReference type="InParanoid" id="Q8RH43"/>
<dbReference type="BioCyc" id="FNUC190304:G1FZS-684-MONOMER"/>
<dbReference type="UniPathway" id="UPA00848">
    <property type="reaction ID" value="UER00151"/>
</dbReference>
<dbReference type="Proteomes" id="UP000002521">
    <property type="component" value="Chromosome"/>
</dbReference>
<dbReference type="GO" id="GO:0005737">
    <property type="term" value="C:cytoplasm"/>
    <property type="evidence" value="ECO:0000318"/>
    <property type="project" value="GO_Central"/>
</dbReference>
<dbReference type="GO" id="GO:0005525">
    <property type="term" value="F:GTP binding"/>
    <property type="evidence" value="ECO:0000318"/>
    <property type="project" value="GO_Central"/>
</dbReference>
<dbReference type="GO" id="GO:0003934">
    <property type="term" value="F:GTP cyclohydrolase I activity"/>
    <property type="evidence" value="ECO:0000318"/>
    <property type="project" value="GO_Central"/>
</dbReference>
<dbReference type="GO" id="GO:0008270">
    <property type="term" value="F:zinc ion binding"/>
    <property type="evidence" value="ECO:0000318"/>
    <property type="project" value="GO_Central"/>
</dbReference>
<dbReference type="GO" id="GO:0006730">
    <property type="term" value="P:one-carbon metabolic process"/>
    <property type="evidence" value="ECO:0007669"/>
    <property type="project" value="UniProtKB-UniRule"/>
</dbReference>
<dbReference type="GO" id="GO:0006729">
    <property type="term" value="P:tetrahydrobiopterin biosynthetic process"/>
    <property type="evidence" value="ECO:0000318"/>
    <property type="project" value="GO_Central"/>
</dbReference>
<dbReference type="GO" id="GO:0046654">
    <property type="term" value="P:tetrahydrofolate biosynthetic process"/>
    <property type="evidence" value="ECO:0007669"/>
    <property type="project" value="UniProtKB-UniRule"/>
</dbReference>
<dbReference type="FunFam" id="3.30.1130.10:FF:000001">
    <property type="entry name" value="GTP cyclohydrolase 1"/>
    <property type="match status" value="1"/>
</dbReference>
<dbReference type="Gene3D" id="1.10.286.10">
    <property type="match status" value="1"/>
</dbReference>
<dbReference type="Gene3D" id="3.30.1130.10">
    <property type="match status" value="1"/>
</dbReference>
<dbReference type="HAMAP" id="MF_00223">
    <property type="entry name" value="FolE"/>
    <property type="match status" value="1"/>
</dbReference>
<dbReference type="InterPro" id="IPR043133">
    <property type="entry name" value="GTP-CH-I_C/QueF"/>
</dbReference>
<dbReference type="InterPro" id="IPR043134">
    <property type="entry name" value="GTP-CH-I_N"/>
</dbReference>
<dbReference type="InterPro" id="IPR001474">
    <property type="entry name" value="GTP_CycHdrlase_I"/>
</dbReference>
<dbReference type="InterPro" id="IPR018234">
    <property type="entry name" value="GTP_CycHdrlase_I_CS"/>
</dbReference>
<dbReference type="InterPro" id="IPR020602">
    <property type="entry name" value="GTP_CycHdrlase_I_dom"/>
</dbReference>
<dbReference type="NCBIfam" id="TIGR00063">
    <property type="entry name" value="folE"/>
    <property type="match status" value="1"/>
</dbReference>
<dbReference type="NCBIfam" id="NF006825">
    <property type="entry name" value="PRK09347.1-2"/>
    <property type="match status" value="1"/>
</dbReference>
<dbReference type="NCBIfam" id="NF006826">
    <property type="entry name" value="PRK09347.1-3"/>
    <property type="match status" value="1"/>
</dbReference>
<dbReference type="PANTHER" id="PTHR11109:SF7">
    <property type="entry name" value="GTP CYCLOHYDROLASE 1"/>
    <property type="match status" value="1"/>
</dbReference>
<dbReference type="PANTHER" id="PTHR11109">
    <property type="entry name" value="GTP CYCLOHYDROLASE I"/>
    <property type="match status" value="1"/>
</dbReference>
<dbReference type="Pfam" id="PF01227">
    <property type="entry name" value="GTP_cyclohydroI"/>
    <property type="match status" value="1"/>
</dbReference>
<dbReference type="SUPFAM" id="SSF55620">
    <property type="entry name" value="Tetrahydrobiopterin biosynthesis enzymes-like"/>
    <property type="match status" value="1"/>
</dbReference>
<dbReference type="PROSITE" id="PS00859">
    <property type="entry name" value="GTP_CYCLOHYDROL_1_1"/>
    <property type="match status" value="1"/>
</dbReference>
<dbReference type="PROSITE" id="PS00860">
    <property type="entry name" value="GTP_CYCLOHYDROL_1_2"/>
    <property type="match status" value="1"/>
</dbReference>
<sequence length="187" mass="21797">MEEKMDSKRIENAFFEVIEALGDVEYKEELKDTPKRIADSYKEIFYGIDIDPKEVLTKTFEVNSNELIMEKNMDFYSMCEHHFLPFFGTVCIAYVPNKKIFGFGDILKLIEILSRRPQLQERLTEEIAKYIYEILNCQGVYVVVEAKHLCVTMRGQKKENTKILTTSAKGVFETDSNKKLEVLTLLK</sequence>
<feature type="chain" id="PRO_0000119408" description="GTP cyclohydrolase 1">
    <location>
        <begin position="1"/>
        <end position="187"/>
    </location>
</feature>
<feature type="binding site" evidence="2">
    <location>
        <position position="79"/>
    </location>
    <ligand>
        <name>Zn(2+)</name>
        <dbReference type="ChEBI" id="CHEBI:29105"/>
    </ligand>
</feature>
<feature type="binding site" evidence="2">
    <location>
        <position position="82"/>
    </location>
    <ligand>
        <name>Zn(2+)</name>
        <dbReference type="ChEBI" id="CHEBI:29105"/>
    </ligand>
</feature>
<feature type="binding site" evidence="2">
    <location>
        <position position="150"/>
    </location>
    <ligand>
        <name>Zn(2+)</name>
        <dbReference type="ChEBI" id="CHEBI:29105"/>
    </ligand>
</feature>
<keyword id="KW-0342">GTP-binding</keyword>
<keyword id="KW-0378">Hydrolase</keyword>
<keyword id="KW-0479">Metal-binding</keyword>
<keyword id="KW-0547">Nucleotide-binding</keyword>
<keyword id="KW-0554">One-carbon metabolism</keyword>
<keyword id="KW-1185">Reference proteome</keyword>
<keyword id="KW-0862">Zinc</keyword>
<evidence type="ECO:0000250" key="1"/>
<evidence type="ECO:0000255" key="2">
    <source>
        <dbReference type="HAMAP-Rule" id="MF_00223"/>
    </source>
</evidence>
<name>GCH1_FUSNN</name>
<comment type="catalytic activity">
    <reaction evidence="2">
        <text>GTP + H2O = 7,8-dihydroneopterin 3'-triphosphate + formate + H(+)</text>
        <dbReference type="Rhea" id="RHEA:17473"/>
        <dbReference type="ChEBI" id="CHEBI:15377"/>
        <dbReference type="ChEBI" id="CHEBI:15378"/>
        <dbReference type="ChEBI" id="CHEBI:15740"/>
        <dbReference type="ChEBI" id="CHEBI:37565"/>
        <dbReference type="ChEBI" id="CHEBI:58462"/>
        <dbReference type="EC" id="3.5.4.16"/>
    </reaction>
</comment>
<comment type="pathway">
    <text evidence="2">Cofactor biosynthesis; 7,8-dihydroneopterin triphosphate biosynthesis; 7,8-dihydroneopterin triphosphate from GTP: step 1/1.</text>
</comment>
<comment type="subunit">
    <text evidence="1">Toroid-shaped homodecamer, composed of two pentamers of five dimers.</text>
</comment>
<comment type="similarity">
    <text evidence="2">Belongs to the GTP cyclohydrolase I family.</text>
</comment>
<protein>
    <recommendedName>
        <fullName evidence="2">GTP cyclohydrolase 1</fullName>
        <ecNumber evidence="2">3.5.4.16</ecNumber>
    </recommendedName>
    <alternativeName>
        <fullName evidence="2">GTP cyclohydrolase I</fullName>
        <shortName evidence="2">GTP-CH-I</shortName>
    </alternativeName>
</protein>
<proteinExistence type="inferred from homology"/>
<gene>
    <name evidence="2" type="primary">folE</name>
    <name type="ordered locus">FN0071</name>
</gene>
<accession>Q8RH43</accession>
<reference key="1">
    <citation type="journal article" date="2002" name="J. Bacteriol.">
        <title>Genome sequence and analysis of the oral bacterium Fusobacterium nucleatum strain ATCC 25586.</title>
        <authorList>
            <person name="Kapatral V."/>
            <person name="Anderson I."/>
            <person name="Ivanova N."/>
            <person name="Reznik G."/>
            <person name="Los T."/>
            <person name="Lykidis A."/>
            <person name="Bhattacharyya A."/>
            <person name="Bartman A."/>
            <person name="Gardner W."/>
            <person name="Grechkin G."/>
            <person name="Zhu L."/>
            <person name="Vasieva O."/>
            <person name="Chu L."/>
            <person name="Kogan Y."/>
            <person name="Chaga O."/>
            <person name="Goltsman E."/>
            <person name="Bernal A."/>
            <person name="Larsen N."/>
            <person name="D'Souza M."/>
            <person name="Walunas T."/>
            <person name="Pusch G."/>
            <person name="Haselkorn R."/>
            <person name="Fonstein M."/>
            <person name="Kyrpides N.C."/>
            <person name="Overbeek R."/>
        </authorList>
    </citation>
    <scope>NUCLEOTIDE SEQUENCE [LARGE SCALE GENOMIC DNA]</scope>
    <source>
        <strain>ATCC 25586 / DSM 15643 / BCRC 10681 / CIP 101130 / JCM 8532 / KCTC 2640 / LMG 13131 / VPI 4355</strain>
    </source>
</reference>